<sequence>MFGFDNLILGVYLFNFLLILTATYTDIKERIIPHFVIILMLIVNLPIGYYFFGFDAITSFFATLILCLILGVGMGGGDVKMFTALSPLFAAETIYFVPKDISILIGLSALFAAIFPMTKILKNYWKDIIPSSAYLAMLIGIIVSITEIYSIGNTKTILWSYIILSIFISRKIPKYRIISNKLGYITPIYLIGFYLLNPAYFVSENVLISFFVYIGQLSLISLVIYALTGAEISSKKQISDLKEGDIIRDIVTIKENGEVTVENANILKRFKHMIYGEMGKLEGKSLMTDGEGLSDENLELLNKLQNEGKIGGELNVLTTYPFVPFVLVAYCVITLLNMGVINYLVG</sequence>
<proteinExistence type="evidence at protein level"/>
<name>EPPA_METMP</name>
<feature type="chain" id="PRO_0000462036" description="Prepilin peptidase EppA">
    <location>
        <begin position="1"/>
        <end position="346"/>
    </location>
</feature>
<feature type="transmembrane region" description="Helical" evidence="1">
    <location>
        <begin position="1"/>
        <end position="21"/>
    </location>
</feature>
<feature type="transmembrane region" description="Helical" evidence="1">
    <location>
        <begin position="31"/>
        <end position="51"/>
    </location>
</feature>
<feature type="transmembrane region" description="Helical" evidence="1">
    <location>
        <begin position="56"/>
        <end position="76"/>
    </location>
</feature>
<feature type="transmembrane region" description="Helical" evidence="1">
    <location>
        <begin position="77"/>
        <end position="97"/>
    </location>
</feature>
<feature type="transmembrane region" description="Helical" evidence="1">
    <location>
        <begin position="101"/>
        <end position="121"/>
    </location>
</feature>
<feature type="transmembrane region" description="Helical" evidence="1">
    <location>
        <begin position="128"/>
        <end position="148"/>
    </location>
</feature>
<feature type="transmembrane region" description="Helical" evidence="1">
    <location>
        <begin position="149"/>
        <end position="169"/>
    </location>
</feature>
<feature type="transmembrane region" description="Helical" evidence="1">
    <location>
        <begin position="182"/>
        <end position="202"/>
    </location>
</feature>
<feature type="transmembrane region" description="Helical" evidence="1">
    <location>
        <begin position="206"/>
        <end position="226"/>
    </location>
</feature>
<feature type="transmembrane region" description="Helical" evidence="1">
    <location>
        <begin position="321"/>
        <end position="341"/>
    </location>
</feature>
<comment type="function">
    <text evidence="2 3">Peptidase that processes the N-terminus of prepilins (PubMed:17114255, PubMed:25569238). Specifically cleaves proteins with a class III (type IV pilin-like) signal sequence, such as the major structural pilin EpdE and the minor pilins EpdA, EpdC and EpdD (PubMed:17114255, PubMed:25569238). Is not able to cleave the preflagellin subunit FlaB2 (PubMed:17114255).</text>
</comment>
<comment type="subcellular location">
    <subcellularLocation>
        <location evidence="5">Cell membrane</location>
        <topology evidence="1">Multi-pass membrane protein</topology>
    </subcellularLocation>
</comment>
<comment type="similarity">
    <text evidence="5">Belongs to the peptidase A24 family.</text>
</comment>
<accession>Q6M0N8</accession>
<dbReference type="EC" id="3.4.-.-" evidence="2 3"/>
<dbReference type="EMBL" id="BX950229">
    <property type="protein sequence ID" value="CAF29788.1"/>
    <property type="molecule type" value="Genomic_DNA"/>
</dbReference>
<dbReference type="RefSeq" id="WP_011170176.1">
    <property type="nucleotide sequence ID" value="NC_005791.1"/>
</dbReference>
<dbReference type="STRING" id="267377.MMP0232"/>
<dbReference type="MEROPS" id="A24.018"/>
<dbReference type="EnsemblBacteria" id="CAF29788">
    <property type="protein sequence ID" value="CAF29788"/>
    <property type="gene ID" value="MMP0232"/>
</dbReference>
<dbReference type="GeneID" id="2761195"/>
<dbReference type="KEGG" id="mmp:MMP0232"/>
<dbReference type="PATRIC" id="fig|267377.15.peg.234"/>
<dbReference type="eggNOG" id="arCOG02300">
    <property type="taxonomic scope" value="Archaea"/>
</dbReference>
<dbReference type="HOGENOM" id="CLU_805645_0_0_2"/>
<dbReference type="OrthoDB" id="65749at2157"/>
<dbReference type="Proteomes" id="UP000000590">
    <property type="component" value="Chromosome"/>
</dbReference>
<dbReference type="GO" id="GO:0005886">
    <property type="term" value="C:plasma membrane"/>
    <property type="evidence" value="ECO:0007669"/>
    <property type="project" value="UniProtKB-SubCell"/>
</dbReference>
<dbReference type="GO" id="GO:0004190">
    <property type="term" value="F:aspartic-type endopeptidase activity"/>
    <property type="evidence" value="ECO:0007669"/>
    <property type="project" value="InterPro"/>
</dbReference>
<dbReference type="Gene3D" id="1.20.120.1220">
    <property type="match status" value="1"/>
</dbReference>
<dbReference type="InterPro" id="IPR009639">
    <property type="entry name" value="Pept_A24A_C_arc"/>
</dbReference>
<dbReference type="InterPro" id="IPR000045">
    <property type="entry name" value="Prepilin_IV_endopep_pep"/>
</dbReference>
<dbReference type="Pfam" id="PF06819">
    <property type="entry name" value="Arc_PepC"/>
    <property type="match status" value="1"/>
</dbReference>
<dbReference type="Pfam" id="PF01478">
    <property type="entry name" value="Peptidase_A24"/>
    <property type="match status" value="1"/>
</dbReference>
<keyword id="KW-1003">Cell membrane</keyword>
<keyword id="KW-0378">Hydrolase</keyword>
<keyword id="KW-0472">Membrane</keyword>
<keyword id="KW-0645">Protease</keyword>
<keyword id="KW-1185">Reference proteome</keyword>
<keyword id="KW-0812">Transmembrane</keyword>
<keyword id="KW-1133">Transmembrane helix</keyword>
<evidence type="ECO:0000255" key="1"/>
<evidence type="ECO:0000269" key="2">
    <source>
    </source>
</evidence>
<evidence type="ECO:0000269" key="3">
    <source>
    </source>
</evidence>
<evidence type="ECO:0000303" key="4">
    <source>
    </source>
</evidence>
<evidence type="ECO:0000305" key="5"/>
<evidence type="ECO:0000312" key="6">
    <source>
        <dbReference type="EMBL" id="CAF29788.1"/>
    </source>
</evidence>
<protein>
    <recommendedName>
        <fullName evidence="4">Prepilin peptidase EppA</fullName>
        <ecNumber evidence="2 3">3.4.-.-</ecNumber>
    </recommendedName>
    <alternativeName>
        <fullName evidence="4">Euryarchaeal type IV prepilin peptidase</fullName>
    </alternativeName>
</protein>
<gene>
    <name evidence="4" type="primary">eppA</name>
    <name evidence="6" type="ordered locus">MMP0232</name>
</gene>
<reference key="1">
    <citation type="journal article" date="2004" name="J. Bacteriol.">
        <title>Complete genome sequence of the genetically tractable hydrogenotrophic methanogen Methanococcus maripaludis.</title>
        <authorList>
            <person name="Hendrickson E.L."/>
            <person name="Kaul R."/>
            <person name="Zhou Y."/>
            <person name="Bovee D."/>
            <person name="Chapman P."/>
            <person name="Chung J."/>
            <person name="Conway de Macario E."/>
            <person name="Dodsworth J.A."/>
            <person name="Gillett W."/>
            <person name="Graham D.E."/>
            <person name="Hackett M."/>
            <person name="Haydock A.K."/>
            <person name="Kang A."/>
            <person name="Land M.L."/>
            <person name="Levy R."/>
            <person name="Lie T.J."/>
            <person name="Major T.A."/>
            <person name="Moore B.C."/>
            <person name="Porat I."/>
            <person name="Palmeiri A."/>
            <person name="Rouse G."/>
            <person name="Saenphimmachak C."/>
            <person name="Soell D."/>
            <person name="Van Dien S."/>
            <person name="Wang T."/>
            <person name="Whitman W.B."/>
            <person name="Xia Q."/>
            <person name="Zhang Y."/>
            <person name="Larimer F.W."/>
            <person name="Olson M.V."/>
            <person name="Leigh J.A."/>
        </authorList>
    </citation>
    <scope>NUCLEOTIDE SEQUENCE [LARGE SCALE GENOMIC DNA]</scope>
    <source>
        <strain>DSM 14266 / JCM 13030 / NBRC 101832 / S2 / LL</strain>
    </source>
</reference>
<reference key="2">
    <citation type="journal article" date="2007" name="J. Bacteriol.">
        <title>Identification of diverse archaeal proteins with class III signal peptides cleaved by distinct archaeal prepilin peptidases.</title>
        <authorList>
            <person name="Szabo Z."/>
            <person name="Stahl A.O."/>
            <person name="Albers S.V."/>
            <person name="Kissinger J.C."/>
            <person name="Driessen A.J."/>
            <person name="Pohlschroeder M."/>
        </authorList>
    </citation>
    <scope>FUNCTION AS A PEPTIDASE</scope>
    <source>
        <strain>DSM 14266 / JCM 13030 / NBRC 101832 / S2 / LL</strain>
    </source>
</reference>
<reference key="3">
    <citation type="journal article" date="2015" name="Life">
        <title>Pilin Processing Follows a Different Temporal Route than That of Archaellins in Methanococcus maripaludis.</title>
        <authorList>
            <person name="Nair D.B."/>
            <person name="Jarrell K.F."/>
        </authorList>
    </citation>
    <scope>FUNCTION AS A PEPTIDASE</scope>
    <source>
        <strain>DSM 14266 / JCM 13030 / NBRC 101832 / S2 / LL</strain>
    </source>
</reference>
<organism>
    <name type="scientific">Methanococcus maripaludis (strain DSM 14266 / JCM 13030 / NBRC 101832 / S2 / LL)</name>
    <dbReference type="NCBI Taxonomy" id="267377"/>
    <lineage>
        <taxon>Archaea</taxon>
        <taxon>Methanobacteriati</taxon>
        <taxon>Methanobacteriota</taxon>
        <taxon>Methanomada group</taxon>
        <taxon>Methanococci</taxon>
        <taxon>Methanococcales</taxon>
        <taxon>Methanococcaceae</taxon>
        <taxon>Methanococcus</taxon>
    </lineage>
</organism>